<gene>
    <name type="primary">SELE</name>
</gene>
<reference key="1">
    <citation type="submission" date="1993-08" db="EMBL/GenBank/DDBJ databases">
        <title>Molecular cloning of canine E-selectin and regulation of expression.</title>
        <authorList>
            <person name="Manning A.M."/>
            <person name="Lane C.L."/>
            <person name="Auchampach J.A."/>
            <person name="Kukielka G.L."/>
            <person name="Rosenbloom C.L."/>
            <person name="Anderson D.C."/>
        </authorList>
    </citation>
    <scope>NUCLEOTIDE SEQUENCE [MRNA]</scope>
    <source>
        <tissue>Jugular vein</tissue>
    </source>
</reference>
<organism>
    <name type="scientific">Canis lupus familiaris</name>
    <name type="common">Dog</name>
    <name type="synonym">Canis familiaris</name>
    <dbReference type="NCBI Taxonomy" id="9615"/>
    <lineage>
        <taxon>Eukaryota</taxon>
        <taxon>Metazoa</taxon>
        <taxon>Chordata</taxon>
        <taxon>Craniata</taxon>
        <taxon>Vertebrata</taxon>
        <taxon>Euteleostomi</taxon>
        <taxon>Mammalia</taxon>
        <taxon>Eutheria</taxon>
        <taxon>Laurasiatheria</taxon>
        <taxon>Carnivora</taxon>
        <taxon>Caniformia</taxon>
        <taxon>Canidae</taxon>
        <taxon>Canis</taxon>
    </lineage>
</organism>
<sequence>MITSQLLPALTLVLLLFKEGGAWSYNASTEAMTFDEASTYCQQRYTHLVAIQNQEEIKYLNSMFTYTPTYYWIGIRKVNKKWTWIGTQKLLTEEAKNWAPGEPNNKQNDEDCVEIYIKRDKDSGKWNDERCDKKKLALCYTAACTPTSCSGHGECVETVNNYTCKCHPGFRGLRCEQVVTCQAQEAPEHGSLVCTHPLGTFSYNSSCFVSCDKGYLPSSTEATQCTSTGEWSASPPACNVVECSALTNPCHGVMDCLQSSGNFPWNMTCTFECEEGFELMGPKRLQCTSSGNWDNRKPTCKAVTCGAIGHPQNGSVSCSHSPAGEFSVRSSCNFTCNEGFLMQGPAQIECTAQGQWSQQVPVCKASQCKALSSPERGYMSCLPGASGSFQSGSSCEFFCEKGFVLKGSKTLQCGLTGKWDSEEPTCEAVKCDAVQQPQDGLVRCAHSSTGEFTYKSSCAFSCEEGFELHGSAQLECTSQGQGVTGGPSCQVVQCFKSGSFRKDEHKLQGEPVFGAVCAFACPEGWTLNGSAALMCDATGHWSGMLPTCEAPTESSIPLAVGLTAGGTSLLTVASFLLWLLKRLRKRAKKFVPASSCQSLQSDGSYHMPCSI</sequence>
<protein>
    <recommendedName>
        <fullName>E-selectin</fullName>
    </recommendedName>
    <alternativeName>
        <fullName>CD62 antigen-like family member E</fullName>
    </alternativeName>
    <alternativeName>
        <fullName>Endothelial leukocyte adhesion molecule 1</fullName>
        <shortName>ELAM-1</shortName>
    </alternativeName>
    <alternativeName>
        <fullName>Leukocyte-endothelial cell adhesion molecule 2</fullName>
        <shortName>LECAM2</shortName>
    </alternativeName>
    <cdAntigenName>CD62E</cdAntigenName>
</protein>
<accession>P33730</accession>
<name>LYAM2_CANLF</name>
<comment type="function">
    <text evidence="2">Cell-surface glycoprotein having a role in immunoadhesion. Mediates in the adhesion of blood neutrophils in cytokine-activated endothelium through interaction with SELPLG/PSGL1. May have a role in capillary morphogenesis.</text>
</comment>
<comment type="subunit">
    <text evidence="2">Interacts with SELPLG/PSGL1 and PODXL2 through the sialyl Lewis X epitope. SELPLG sulfation appears not to be required for this interaction.</text>
</comment>
<comment type="subcellular location">
    <subcellularLocation>
        <location evidence="2">Cell membrane</location>
        <topology evidence="2">Single-pass type I membrane protein</topology>
    </subcellularLocation>
</comment>
<comment type="similarity">
    <text evidence="7">Belongs to the selectin/LECAM family.</text>
</comment>
<feature type="signal peptide" evidence="1">
    <location>
        <begin position="1"/>
        <end position="22"/>
    </location>
</feature>
<feature type="chain" id="PRO_0000017490" description="E-selectin">
    <location>
        <begin position="23"/>
        <end position="611"/>
    </location>
</feature>
<feature type="topological domain" description="Extracellular" evidence="3">
    <location>
        <begin position="23"/>
        <end position="557"/>
    </location>
</feature>
<feature type="transmembrane region" description="Helical" evidence="3">
    <location>
        <begin position="558"/>
        <end position="579"/>
    </location>
</feature>
<feature type="topological domain" description="Cytoplasmic" evidence="3">
    <location>
        <begin position="580"/>
        <end position="611"/>
    </location>
</feature>
<feature type="domain" description="C-type lectin" evidence="4">
    <location>
        <begin position="23"/>
        <end position="140"/>
    </location>
</feature>
<feature type="domain" description="EGF-like" evidence="5">
    <location>
        <begin position="141"/>
        <end position="176"/>
    </location>
</feature>
<feature type="domain" description="Sushi 1" evidence="6">
    <location>
        <begin position="179"/>
        <end position="240"/>
    </location>
</feature>
<feature type="domain" description="Sushi 2" evidence="6">
    <location>
        <begin position="241"/>
        <end position="302"/>
    </location>
</feature>
<feature type="domain" description="Sushi 3" evidence="6">
    <location>
        <begin position="316"/>
        <end position="365"/>
    </location>
</feature>
<feature type="domain" description="Sushi 4" evidence="6">
    <location>
        <begin position="367"/>
        <end position="428"/>
    </location>
</feature>
<feature type="domain" description="Sushi 5" evidence="6">
    <location>
        <begin position="430"/>
        <end position="491"/>
    </location>
</feature>
<feature type="domain" description="Sushi 6" evidence="6">
    <location>
        <begin position="492"/>
        <end position="550"/>
    </location>
</feature>
<feature type="binding site" evidence="2">
    <location>
        <begin position="102"/>
        <end position="110"/>
    </location>
    <ligand>
        <name>a carbohydrate</name>
        <dbReference type="ChEBI" id="CHEBI:16646"/>
    </ligand>
</feature>
<feature type="binding site" evidence="2">
    <location>
        <position position="102"/>
    </location>
    <ligand>
        <name>Ca(2+)</name>
        <dbReference type="ChEBI" id="CHEBI:29108"/>
    </ligand>
</feature>
<feature type="binding site" evidence="2">
    <location>
        <position position="104"/>
    </location>
    <ligand>
        <name>Ca(2+)</name>
        <dbReference type="ChEBI" id="CHEBI:29108"/>
    </ligand>
</feature>
<feature type="binding site" evidence="2">
    <location>
        <position position="110"/>
    </location>
    <ligand>
        <name>Ca(2+)</name>
        <dbReference type="ChEBI" id="CHEBI:29108"/>
    </ligand>
</feature>
<feature type="binding site" evidence="2">
    <location>
        <begin position="114"/>
        <end position="119"/>
    </location>
    <ligand>
        <name>a carbohydrate</name>
        <dbReference type="ChEBI" id="CHEBI:16646"/>
    </ligand>
</feature>
<feature type="binding site" evidence="2">
    <location>
        <begin position="127"/>
        <end position="129"/>
    </location>
    <ligand>
        <name>a carbohydrate</name>
        <dbReference type="ChEBI" id="CHEBI:16646"/>
    </ligand>
</feature>
<feature type="binding site" evidence="2">
    <location>
        <position position="127"/>
    </location>
    <ligand>
        <name>Ca(2+)</name>
        <dbReference type="ChEBI" id="CHEBI:29108"/>
    </ligand>
</feature>
<feature type="binding site" evidence="2">
    <location>
        <position position="128"/>
    </location>
    <ligand>
        <name>Ca(2+)</name>
        <dbReference type="ChEBI" id="CHEBI:29108"/>
    </ligand>
</feature>
<feature type="glycosylation site" description="N-linked (GlcNAc...) asparagine" evidence="3">
    <location>
        <position position="26"/>
    </location>
</feature>
<feature type="glycosylation site" description="N-linked (GlcNAc...) asparagine" evidence="3">
    <location>
        <position position="161"/>
    </location>
</feature>
<feature type="glycosylation site" description="N-linked (GlcNAc...) asparagine" evidence="3">
    <location>
        <position position="204"/>
    </location>
</feature>
<feature type="glycosylation site" description="N-linked (GlcNAc...) asparagine" evidence="3">
    <location>
        <position position="266"/>
    </location>
</feature>
<feature type="glycosylation site" description="N-linked (GlcNAc...) asparagine" evidence="3">
    <location>
        <position position="313"/>
    </location>
</feature>
<feature type="glycosylation site" description="N-linked (GlcNAc...) asparagine" evidence="3">
    <location>
        <position position="333"/>
    </location>
</feature>
<feature type="glycosylation site" description="N-linked (GlcNAc...) asparagine" evidence="3">
    <location>
        <position position="528"/>
    </location>
</feature>
<feature type="disulfide bond" evidence="2">
    <location>
        <begin position="41"/>
        <end position="139"/>
    </location>
</feature>
<feature type="disulfide bond" evidence="2">
    <location>
        <begin position="112"/>
        <end position="131"/>
    </location>
</feature>
<feature type="disulfide bond" evidence="2">
    <location>
        <begin position="144"/>
        <end position="155"/>
    </location>
</feature>
<feature type="disulfide bond" evidence="2">
    <location>
        <begin position="149"/>
        <end position="164"/>
    </location>
</feature>
<feature type="disulfide bond" evidence="2">
    <location>
        <begin position="166"/>
        <end position="175"/>
    </location>
</feature>
<feature type="disulfide bond" evidence="2">
    <location>
        <begin position="181"/>
        <end position="225"/>
    </location>
</feature>
<feature type="disulfide bond" evidence="2">
    <location>
        <begin position="194"/>
        <end position="207"/>
    </location>
</feature>
<feature type="disulfide bond" evidence="2">
    <location>
        <begin position="211"/>
        <end position="238"/>
    </location>
</feature>
<feature type="disulfide bond" evidence="2">
    <location>
        <begin position="243"/>
        <end position="287"/>
    </location>
</feature>
<feature type="disulfide bond" evidence="2">
    <location>
        <begin position="256"/>
        <end position="269"/>
    </location>
</feature>
<feature type="disulfide bond" evidence="2">
    <location>
        <begin position="273"/>
        <end position="300"/>
    </location>
</feature>
<feature type="disulfide bond" evidence="1">
    <location>
        <begin position="305"/>
        <end position="350"/>
    </location>
</feature>
<feature type="disulfide bond" evidence="1">
    <location>
        <begin position="336"/>
        <end position="363"/>
    </location>
</feature>
<feature type="disulfide bond" evidence="1">
    <location>
        <begin position="368"/>
        <end position="413"/>
    </location>
</feature>
<feature type="disulfide bond" evidence="1">
    <location>
        <begin position="399"/>
        <end position="426"/>
    </location>
</feature>
<feature type="disulfide bond" evidence="1">
    <location>
        <begin position="431"/>
        <end position="476"/>
    </location>
</feature>
<feature type="disulfide bond" evidence="1">
    <location>
        <begin position="462"/>
        <end position="489"/>
    </location>
</feature>
<feature type="disulfide bond" evidence="1">
    <location>
        <begin position="494"/>
        <end position="535"/>
    </location>
</feature>
<feature type="disulfide bond" evidence="1">
    <location>
        <begin position="521"/>
        <end position="548"/>
    </location>
</feature>
<keyword id="KW-0106">Calcium</keyword>
<keyword id="KW-0130">Cell adhesion</keyword>
<keyword id="KW-1003">Cell membrane</keyword>
<keyword id="KW-1015">Disulfide bond</keyword>
<keyword id="KW-0245">EGF-like domain</keyword>
<keyword id="KW-0325">Glycoprotein</keyword>
<keyword id="KW-0430">Lectin</keyword>
<keyword id="KW-0472">Membrane</keyword>
<keyword id="KW-0479">Metal-binding</keyword>
<keyword id="KW-1185">Reference proteome</keyword>
<keyword id="KW-0677">Repeat</keyword>
<keyword id="KW-0732">Signal</keyword>
<keyword id="KW-0768">Sushi</keyword>
<keyword id="KW-0812">Transmembrane</keyword>
<keyword id="KW-1133">Transmembrane helix</keyword>
<proteinExistence type="evidence at transcript level"/>
<dbReference type="EMBL" id="L23087">
    <property type="protein sequence ID" value="AAA30843.1"/>
    <property type="molecule type" value="mRNA"/>
</dbReference>
<dbReference type="SMR" id="P33730"/>
<dbReference type="FunCoup" id="P33730">
    <property type="interactions" value="8"/>
</dbReference>
<dbReference type="STRING" id="9615.ENSCAFP00000022347"/>
<dbReference type="GlyCosmos" id="P33730">
    <property type="glycosylation" value="7 sites, No reported glycans"/>
</dbReference>
<dbReference type="PaxDb" id="9612-ENSCAFP00000022350"/>
<dbReference type="eggNOG" id="KOG4297">
    <property type="taxonomic scope" value="Eukaryota"/>
</dbReference>
<dbReference type="InParanoid" id="P33730"/>
<dbReference type="OrthoDB" id="406096at2759"/>
<dbReference type="Proteomes" id="UP000002254">
    <property type="component" value="Unplaced"/>
</dbReference>
<dbReference type="Proteomes" id="UP000694429">
    <property type="component" value="Unplaced"/>
</dbReference>
<dbReference type="Proteomes" id="UP000694542">
    <property type="component" value="Unplaced"/>
</dbReference>
<dbReference type="Proteomes" id="UP000805418">
    <property type="component" value="Unplaced"/>
</dbReference>
<dbReference type="GO" id="GO:0009897">
    <property type="term" value="C:external side of plasma membrane"/>
    <property type="evidence" value="ECO:0000318"/>
    <property type="project" value="GO_Central"/>
</dbReference>
<dbReference type="GO" id="GO:0005615">
    <property type="term" value="C:extracellular space"/>
    <property type="evidence" value="ECO:0000318"/>
    <property type="project" value="GO_Central"/>
</dbReference>
<dbReference type="GO" id="GO:0005509">
    <property type="term" value="F:calcium ion binding"/>
    <property type="evidence" value="ECO:0007669"/>
    <property type="project" value="InterPro"/>
</dbReference>
<dbReference type="GO" id="GO:0070492">
    <property type="term" value="F:oligosaccharide binding"/>
    <property type="evidence" value="ECO:0000318"/>
    <property type="project" value="GO_Central"/>
</dbReference>
<dbReference type="GO" id="GO:0033691">
    <property type="term" value="F:sialic acid binding"/>
    <property type="evidence" value="ECO:0000318"/>
    <property type="project" value="GO_Central"/>
</dbReference>
<dbReference type="GO" id="GO:0007157">
    <property type="term" value="P:heterophilic cell-cell adhesion via plasma membrane cell adhesion molecules"/>
    <property type="evidence" value="ECO:0000318"/>
    <property type="project" value="GO_Central"/>
</dbReference>
<dbReference type="GO" id="GO:0050901">
    <property type="term" value="P:leukocyte tethering or rolling"/>
    <property type="evidence" value="ECO:0000318"/>
    <property type="project" value="GO_Central"/>
</dbReference>
<dbReference type="GO" id="GO:1903238">
    <property type="term" value="P:positive regulation of leukocyte tethering or rolling"/>
    <property type="evidence" value="ECO:0000250"/>
    <property type="project" value="UniProtKB"/>
</dbReference>
<dbReference type="GO" id="GO:0034097">
    <property type="term" value="P:response to cytokine"/>
    <property type="evidence" value="ECO:0000318"/>
    <property type="project" value="GO_Central"/>
</dbReference>
<dbReference type="CDD" id="cd00033">
    <property type="entry name" value="CCP"/>
    <property type="match status" value="6"/>
</dbReference>
<dbReference type="CDD" id="cd03592">
    <property type="entry name" value="CLECT_selectins_like"/>
    <property type="match status" value="1"/>
</dbReference>
<dbReference type="CDD" id="cd00054">
    <property type="entry name" value="EGF_CA"/>
    <property type="match status" value="1"/>
</dbReference>
<dbReference type="FunFam" id="3.10.100.10:FF:000007">
    <property type="entry name" value="L-selectin"/>
    <property type="match status" value="1"/>
</dbReference>
<dbReference type="FunFam" id="2.10.25.10:FF:000176">
    <property type="entry name" value="Selectin P"/>
    <property type="match status" value="1"/>
</dbReference>
<dbReference type="FunFam" id="2.10.70.10:FF:000001">
    <property type="entry name" value="Selectin P"/>
    <property type="match status" value="5"/>
</dbReference>
<dbReference type="Gene3D" id="2.10.70.10">
    <property type="entry name" value="Complement Module, domain 1"/>
    <property type="match status" value="6"/>
</dbReference>
<dbReference type="Gene3D" id="3.10.100.10">
    <property type="entry name" value="Mannose-Binding Protein A, subunit A"/>
    <property type="match status" value="1"/>
</dbReference>
<dbReference type="InterPro" id="IPR001304">
    <property type="entry name" value="C-type_lectin-like"/>
</dbReference>
<dbReference type="InterPro" id="IPR016186">
    <property type="entry name" value="C-type_lectin-like/link_sf"/>
</dbReference>
<dbReference type="InterPro" id="IPR018378">
    <property type="entry name" value="C-type_lectin_CS"/>
</dbReference>
<dbReference type="InterPro" id="IPR050350">
    <property type="entry name" value="Compl-Cell_Adhes-Reg"/>
</dbReference>
<dbReference type="InterPro" id="IPR016187">
    <property type="entry name" value="CTDL_fold"/>
</dbReference>
<dbReference type="InterPro" id="IPR001881">
    <property type="entry name" value="EGF-like_Ca-bd_dom"/>
</dbReference>
<dbReference type="InterPro" id="IPR000742">
    <property type="entry name" value="EGF-like_dom"/>
</dbReference>
<dbReference type="InterPro" id="IPR033991">
    <property type="entry name" value="Selectin_CTLD"/>
</dbReference>
<dbReference type="InterPro" id="IPR002396">
    <property type="entry name" value="Selectin_superfamily"/>
</dbReference>
<dbReference type="InterPro" id="IPR035976">
    <property type="entry name" value="Sushi/SCR/CCP_sf"/>
</dbReference>
<dbReference type="InterPro" id="IPR000436">
    <property type="entry name" value="Sushi_SCR_CCP_dom"/>
</dbReference>
<dbReference type="PANTHER" id="PTHR19325">
    <property type="entry name" value="COMPLEMENT COMPONENT-RELATED SUSHI DOMAIN-CONTAINING"/>
    <property type="match status" value="1"/>
</dbReference>
<dbReference type="PANTHER" id="PTHR19325:SF493">
    <property type="entry name" value="E-SELECTIN"/>
    <property type="match status" value="1"/>
</dbReference>
<dbReference type="Pfam" id="PF00008">
    <property type="entry name" value="EGF"/>
    <property type="match status" value="1"/>
</dbReference>
<dbReference type="Pfam" id="PF00059">
    <property type="entry name" value="Lectin_C"/>
    <property type="match status" value="1"/>
</dbReference>
<dbReference type="Pfam" id="PF00084">
    <property type="entry name" value="Sushi"/>
    <property type="match status" value="6"/>
</dbReference>
<dbReference type="PRINTS" id="PR00343">
    <property type="entry name" value="SELECTIN"/>
</dbReference>
<dbReference type="SMART" id="SM00032">
    <property type="entry name" value="CCP"/>
    <property type="match status" value="6"/>
</dbReference>
<dbReference type="SMART" id="SM00034">
    <property type="entry name" value="CLECT"/>
    <property type="match status" value="1"/>
</dbReference>
<dbReference type="SMART" id="SM00181">
    <property type="entry name" value="EGF"/>
    <property type="match status" value="3"/>
</dbReference>
<dbReference type="SMART" id="SM00179">
    <property type="entry name" value="EGF_CA"/>
    <property type="match status" value="1"/>
</dbReference>
<dbReference type="SUPFAM" id="SSF56436">
    <property type="entry name" value="C-type lectin-like"/>
    <property type="match status" value="1"/>
</dbReference>
<dbReference type="SUPFAM" id="SSF57535">
    <property type="entry name" value="Complement control module/SCR domain"/>
    <property type="match status" value="6"/>
</dbReference>
<dbReference type="PROSITE" id="PS00615">
    <property type="entry name" value="C_TYPE_LECTIN_1"/>
    <property type="match status" value="1"/>
</dbReference>
<dbReference type="PROSITE" id="PS50041">
    <property type="entry name" value="C_TYPE_LECTIN_2"/>
    <property type="match status" value="1"/>
</dbReference>
<dbReference type="PROSITE" id="PS00022">
    <property type="entry name" value="EGF_1"/>
    <property type="match status" value="1"/>
</dbReference>
<dbReference type="PROSITE" id="PS01186">
    <property type="entry name" value="EGF_2"/>
    <property type="match status" value="1"/>
</dbReference>
<dbReference type="PROSITE" id="PS50026">
    <property type="entry name" value="EGF_3"/>
    <property type="match status" value="1"/>
</dbReference>
<dbReference type="PROSITE" id="PS50923">
    <property type="entry name" value="SUSHI"/>
    <property type="match status" value="6"/>
</dbReference>
<evidence type="ECO:0000250" key="1"/>
<evidence type="ECO:0000250" key="2">
    <source>
        <dbReference type="UniProtKB" id="P16581"/>
    </source>
</evidence>
<evidence type="ECO:0000255" key="3"/>
<evidence type="ECO:0000255" key="4">
    <source>
        <dbReference type="PROSITE-ProRule" id="PRU00040"/>
    </source>
</evidence>
<evidence type="ECO:0000255" key="5">
    <source>
        <dbReference type="PROSITE-ProRule" id="PRU00076"/>
    </source>
</evidence>
<evidence type="ECO:0000255" key="6">
    <source>
        <dbReference type="PROSITE-ProRule" id="PRU00302"/>
    </source>
</evidence>
<evidence type="ECO:0000305" key="7"/>